<organism>
    <name type="scientific">Salmonella agona (strain SL483)</name>
    <dbReference type="NCBI Taxonomy" id="454166"/>
    <lineage>
        <taxon>Bacteria</taxon>
        <taxon>Pseudomonadati</taxon>
        <taxon>Pseudomonadota</taxon>
        <taxon>Gammaproteobacteria</taxon>
        <taxon>Enterobacterales</taxon>
        <taxon>Enterobacteriaceae</taxon>
        <taxon>Salmonella</taxon>
    </lineage>
</organism>
<feature type="chain" id="PRO_1000147821" description="Uncharacterized Nudix hydrolase NudL">
    <location>
        <begin position="1"/>
        <end position="192"/>
    </location>
</feature>
<feature type="domain" description="Nudix hydrolase" evidence="1">
    <location>
        <begin position="29"/>
        <end position="160"/>
    </location>
</feature>
<feature type="short sequence motif" description="Nudix box">
    <location>
        <begin position="67"/>
        <end position="89"/>
    </location>
</feature>
<feature type="binding site" evidence="1">
    <location>
        <position position="83"/>
    </location>
    <ligand>
        <name>Mg(2+)</name>
        <dbReference type="ChEBI" id="CHEBI:18420"/>
    </ligand>
</feature>
<feature type="binding site" evidence="1">
    <location>
        <position position="87"/>
    </location>
    <ligand>
        <name>Mg(2+)</name>
        <dbReference type="ChEBI" id="CHEBI:18420"/>
    </ligand>
</feature>
<evidence type="ECO:0000255" key="1">
    <source>
        <dbReference type="HAMAP-Rule" id="MF_01592"/>
    </source>
</evidence>
<accession>B5F3R6</accession>
<proteinExistence type="inferred from homology"/>
<dbReference type="EC" id="3.6.1.-" evidence="1"/>
<dbReference type="EMBL" id="CP001138">
    <property type="protein sequence ID" value="ACH49099.1"/>
    <property type="molecule type" value="Genomic_DNA"/>
</dbReference>
<dbReference type="RefSeq" id="WP_000381531.1">
    <property type="nucleotide sequence ID" value="NC_011149.1"/>
</dbReference>
<dbReference type="SMR" id="B5F3R6"/>
<dbReference type="KEGG" id="sea:SeAg_B1306"/>
<dbReference type="HOGENOM" id="CLU_040940_5_2_6"/>
<dbReference type="Proteomes" id="UP000008819">
    <property type="component" value="Chromosome"/>
</dbReference>
<dbReference type="GO" id="GO:0010945">
    <property type="term" value="F:coenzyme A diphosphatase activity"/>
    <property type="evidence" value="ECO:0007669"/>
    <property type="project" value="InterPro"/>
</dbReference>
<dbReference type="GO" id="GO:0000287">
    <property type="term" value="F:magnesium ion binding"/>
    <property type="evidence" value="ECO:0007669"/>
    <property type="project" value="UniProtKB-UniRule"/>
</dbReference>
<dbReference type="GO" id="GO:0030145">
    <property type="term" value="F:manganese ion binding"/>
    <property type="evidence" value="ECO:0007669"/>
    <property type="project" value="UniProtKB-UniRule"/>
</dbReference>
<dbReference type="GO" id="GO:0009132">
    <property type="term" value="P:nucleoside diphosphate metabolic process"/>
    <property type="evidence" value="ECO:0007669"/>
    <property type="project" value="InterPro"/>
</dbReference>
<dbReference type="CDD" id="cd03426">
    <property type="entry name" value="NUDIX_CoAse_Nudt7"/>
    <property type="match status" value="1"/>
</dbReference>
<dbReference type="Gene3D" id="3.90.79.10">
    <property type="entry name" value="Nucleoside Triphosphate Pyrophosphohydrolase"/>
    <property type="match status" value="1"/>
</dbReference>
<dbReference type="HAMAP" id="MF_01592">
    <property type="entry name" value="Nudix_NudL"/>
    <property type="match status" value="1"/>
</dbReference>
<dbReference type="InterPro" id="IPR045121">
    <property type="entry name" value="CoAse"/>
</dbReference>
<dbReference type="InterPro" id="IPR015797">
    <property type="entry name" value="NUDIX_hydrolase-like_dom_sf"/>
</dbReference>
<dbReference type="InterPro" id="IPR000086">
    <property type="entry name" value="NUDIX_hydrolase_dom"/>
</dbReference>
<dbReference type="InterPro" id="IPR000059">
    <property type="entry name" value="NUDIX_hydrolase_NudL_CS"/>
</dbReference>
<dbReference type="InterPro" id="IPR023735">
    <property type="entry name" value="Nudix_NudL"/>
</dbReference>
<dbReference type="NCBIfam" id="NF007980">
    <property type="entry name" value="PRK10707.1"/>
    <property type="match status" value="1"/>
</dbReference>
<dbReference type="PANTHER" id="PTHR12992:SF11">
    <property type="entry name" value="MITOCHONDRIAL COENZYME A DIPHOSPHATASE NUDT8"/>
    <property type="match status" value="1"/>
</dbReference>
<dbReference type="PANTHER" id="PTHR12992">
    <property type="entry name" value="NUDIX HYDROLASE"/>
    <property type="match status" value="1"/>
</dbReference>
<dbReference type="Pfam" id="PF00293">
    <property type="entry name" value="NUDIX"/>
    <property type="match status" value="1"/>
</dbReference>
<dbReference type="SUPFAM" id="SSF55811">
    <property type="entry name" value="Nudix"/>
    <property type="match status" value="1"/>
</dbReference>
<dbReference type="PROSITE" id="PS51462">
    <property type="entry name" value="NUDIX"/>
    <property type="match status" value="1"/>
</dbReference>
<dbReference type="PROSITE" id="PS01293">
    <property type="entry name" value="NUDIX_COA"/>
    <property type="match status" value="1"/>
</dbReference>
<reference key="1">
    <citation type="journal article" date="2011" name="J. Bacteriol.">
        <title>Comparative genomics of 28 Salmonella enterica isolates: evidence for CRISPR-mediated adaptive sublineage evolution.</title>
        <authorList>
            <person name="Fricke W.F."/>
            <person name="Mammel M.K."/>
            <person name="McDermott P.F."/>
            <person name="Tartera C."/>
            <person name="White D.G."/>
            <person name="Leclerc J.E."/>
            <person name="Ravel J."/>
            <person name="Cebula T.A."/>
        </authorList>
    </citation>
    <scope>NUCLEOTIDE SEQUENCE [LARGE SCALE GENOMIC DNA]</scope>
    <source>
        <strain>SL483</strain>
    </source>
</reference>
<name>NUDL_SALA4</name>
<comment type="function">
    <text evidence="1">Probably mediates the hydrolysis of some nucleoside diphosphate derivatives.</text>
</comment>
<comment type="cofactor">
    <cofactor evidence="1">
        <name>Mn(2+)</name>
        <dbReference type="ChEBI" id="CHEBI:29035"/>
    </cofactor>
    <cofactor evidence="1">
        <name>Mg(2+)</name>
        <dbReference type="ChEBI" id="CHEBI:18420"/>
    </cofactor>
</comment>
<comment type="similarity">
    <text evidence="1">Belongs to the Nudix hydrolase family. PCD1 subfamily.</text>
</comment>
<protein>
    <recommendedName>
        <fullName evidence="1">Uncharacterized Nudix hydrolase NudL</fullName>
        <ecNumber evidence="1">3.6.1.-</ecNumber>
    </recommendedName>
</protein>
<gene>
    <name evidence="1" type="primary">nudL</name>
    <name type="ordered locus">SeAg_B1306</name>
</gene>
<sequence length="192" mass="21413">MDTSRLTLDHFLSRFQLLRPQITHETLNQRQAAVLIPVVRRPQPGLLLTQRAIHLRKHAGQVAFPGGAVDSTDASLIAAALREAQEEVAIPPQAVEVIGVLPPVDSVTGFQVTPVVGIIPPNLPWRASEDEVSAVFEMPLAQALQLGRYHPLDVYRRGNSHRVWLSWYEHYFVWGMTANILRELALQIGVKP</sequence>
<keyword id="KW-0378">Hydrolase</keyword>
<keyword id="KW-0460">Magnesium</keyword>
<keyword id="KW-0464">Manganese</keyword>
<keyword id="KW-0479">Metal-binding</keyword>